<protein>
    <recommendedName>
        <fullName evidence="1">3-hydroxyacyl-[acyl-carrier-protein] dehydratase FabZ</fullName>
        <ecNumber evidence="1">4.2.1.59</ecNumber>
    </recommendedName>
    <alternativeName>
        <fullName evidence="1">(3R)-hydroxymyristoyl-[acyl-carrier-protein] dehydratase</fullName>
        <shortName evidence="1">(3R)-hydroxymyristoyl-ACP dehydrase</shortName>
    </alternativeName>
    <alternativeName>
        <fullName evidence="1">Beta-hydroxyacyl-ACP dehydratase</fullName>
    </alternativeName>
</protein>
<proteinExistence type="inferred from homology"/>
<evidence type="ECO:0000255" key="1">
    <source>
        <dbReference type="HAMAP-Rule" id="MF_00406"/>
    </source>
</evidence>
<sequence>MMDINEIREYLPHRYPFLLVDRVVDLDVEGKCIRAYKNVSINEPFFNGHFPAHPIMPGVLIIEAMAQAAGILGFKMLDVKPADGTLYYFVGSDKLRFRQPVLPGDQLILEAKFISCKRQIWKFECQASVDGKPVCSAEIICAERKL</sequence>
<comment type="function">
    <text evidence="1">Involved in unsaturated fatty acids biosynthesis. Catalyzes the dehydration of short chain beta-hydroxyacyl-ACPs and long chain saturated and unsaturated beta-hydroxyacyl-ACPs.</text>
</comment>
<comment type="catalytic activity">
    <reaction evidence="1">
        <text>a (3R)-hydroxyacyl-[ACP] = a (2E)-enoyl-[ACP] + H2O</text>
        <dbReference type="Rhea" id="RHEA:13097"/>
        <dbReference type="Rhea" id="RHEA-COMP:9925"/>
        <dbReference type="Rhea" id="RHEA-COMP:9945"/>
        <dbReference type="ChEBI" id="CHEBI:15377"/>
        <dbReference type="ChEBI" id="CHEBI:78784"/>
        <dbReference type="ChEBI" id="CHEBI:78827"/>
        <dbReference type="EC" id="4.2.1.59"/>
    </reaction>
</comment>
<comment type="subcellular location">
    <subcellularLocation>
        <location evidence="1">Cytoplasm</location>
    </subcellularLocation>
</comment>
<comment type="similarity">
    <text evidence="1">Belongs to the thioester dehydratase family. FabZ subfamily.</text>
</comment>
<name>FABZ_PSEF5</name>
<dbReference type="EC" id="4.2.1.59" evidence="1"/>
<dbReference type="EMBL" id="CP000076">
    <property type="protein sequence ID" value="AAY90474.1"/>
    <property type="molecule type" value="Genomic_DNA"/>
</dbReference>
<dbReference type="RefSeq" id="WP_007924058.1">
    <property type="nucleotide sequence ID" value="NC_004129.6"/>
</dbReference>
<dbReference type="SMR" id="Q4KHG5"/>
<dbReference type="STRING" id="220664.PFL_1187"/>
<dbReference type="GeneID" id="93401753"/>
<dbReference type="KEGG" id="pfl:PFL_1187"/>
<dbReference type="eggNOG" id="COG0764">
    <property type="taxonomic scope" value="Bacteria"/>
</dbReference>
<dbReference type="HOGENOM" id="CLU_078912_1_2_6"/>
<dbReference type="Proteomes" id="UP000008540">
    <property type="component" value="Chromosome"/>
</dbReference>
<dbReference type="GO" id="GO:0005737">
    <property type="term" value="C:cytoplasm"/>
    <property type="evidence" value="ECO:0007669"/>
    <property type="project" value="UniProtKB-SubCell"/>
</dbReference>
<dbReference type="GO" id="GO:0016020">
    <property type="term" value="C:membrane"/>
    <property type="evidence" value="ECO:0007669"/>
    <property type="project" value="GOC"/>
</dbReference>
<dbReference type="GO" id="GO:0019171">
    <property type="term" value="F:(3R)-hydroxyacyl-[acyl-carrier-protein] dehydratase activity"/>
    <property type="evidence" value="ECO:0007669"/>
    <property type="project" value="UniProtKB-EC"/>
</dbReference>
<dbReference type="GO" id="GO:0006633">
    <property type="term" value="P:fatty acid biosynthetic process"/>
    <property type="evidence" value="ECO:0007669"/>
    <property type="project" value="UniProtKB-UniRule"/>
</dbReference>
<dbReference type="GO" id="GO:0009245">
    <property type="term" value="P:lipid A biosynthetic process"/>
    <property type="evidence" value="ECO:0007669"/>
    <property type="project" value="UniProtKB-UniRule"/>
</dbReference>
<dbReference type="CDD" id="cd01288">
    <property type="entry name" value="FabZ"/>
    <property type="match status" value="1"/>
</dbReference>
<dbReference type="FunFam" id="3.10.129.10:FF:000001">
    <property type="entry name" value="3-hydroxyacyl-[acyl-carrier-protein] dehydratase FabZ"/>
    <property type="match status" value="1"/>
</dbReference>
<dbReference type="Gene3D" id="3.10.129.10">
    <property type="entry name" value="Hotdog Thioesterase"/>
    <property type="match status" value="1"/>
</dbReference>
<dbReference type="HAMAP" id="MF_00406">
    <property type="entry name" value="FabZ"/>
    <property type="match status" value="1"/>
</dbReference>
<dbReference type="InterPro" id="IPR013114">
    <property type="entry name" value="FabA_FabZ"/>
</dbReference>
<dbReference type="InterPro" id="IPR010084">
    <property type="entry name" value="FabZ"/>
</dbReference>
<dbReference type="InterPro" id="IPR029069">
    <property type="entry name" value="HotDog_dom_sf"/>
</dbReference>
<dbReference type="NCBIfam" id="TIGR01750">
    <property type="entry name" value="fabZ"/>
    <property type="match status" value="1"/>
</dbReference>
<dbReference type="NCBIfam" id="NF000582">
    <property type="entry name" value="PRK00006.1"/>
    <property type="match status" value="1"/>
</dbReference>
<dbReference type="PANTHER" id="PTHR30272">
    <property type="entry name" value="3-HYDROXYACYL-[ACYL-CARRIER-PROTEIN] DEHYDRATASE"/>
    <property type="match status" value="1"/>
</dbReference>
<dbReference type="PANTHER" id="PTHR30272:SF1">
    <property type="entry name" value="3-HYDROXYACYL-[ACYL-CARRIER-PROTEIN] DEHYDRATASE"/>
    <property type="match status" value="1"/>
</dbReference>
<dbReference type="Pfam" id="PF07977">
    <property type="entry name" value="FabA"/>
    <property type="match status" value="1"/>
</dbReference>
<dbReference type="SUPFAM" id="SSF54637">
    <property type="entry name" value="Thioesterase/thiol ester dehydrase-isomerase"/>
    <property type="match status" value="1"/>
</dbReference>
<organism>
    <name type="scientific">Pseudomonas fluorescens (strain ATCC BAA-477 / NRRL B-23932 / Pf-5)</name>
    <dbReference type="NCBI Taxonomy" id="220664"/>
    <lineage>
        <taxon>Bacteria</taxon>
        <taxon>Pseudomonadati</taxon>
        <taxon>Pseudomonadota</taxon>
        <taxon>Gammaproteobacteria</taxon>
        <taxon>Pseudomonadales</taxon>
        <taxon>Pseudomonadaceae</taxon>
        <taxon>Pseudomonas</taxon>
    </lineage>
</organism>
<gene>
    <name evidence="1" type="primary">fabZ</name>
    <name type="ordered locus">PFL_1187</name>
</gene>
<feature type="chain" id="PRO_0000230825" description="3-hydroxyacyl-[acyl-carrier-protein] dehydratase FabZ">
    <location>
        <begin position="1"/>
        <end position="146"/>
    </location>
</feature>
<feature type="active site" evidence="1">
    <location>
        <position position="49"/>
    </location>
</feature>
<reference key="1">
    <citation type="journal article" date="2005" name="Nat. Biotechnol.">
        <title>Complete genome sequence of the plant commensal Pseudomonas fluorescens Pf-5.</title>
        <authorList>
            <person name="Paulsen I.T."/>
            <person name="Press C.M."/>
            <person name="Ravel J."/>
            <person name="Kobayashi D.Y."/>
            <person name="Myers G.S.A."/>
            <person name="Mavrodi D.V."/>
            <person name="DeBoy R.T."/>
            <person name="Seshadri R."/>
            <person name="Ren Q."/>
            <person name="Madupu R."/>
            <person name="Dodson R.J."/>
            <person name="Durkin A.S."/>
            <person name="Brinkac L.M."/>
            <person name="Daugherty S.C."/>
            <person name="Sullivan S.A."/>
            <person name="Rosovitz M.J."/>
            <person name="Gwinn M.L."/>
            <person name="Zhou L."/>
            <person name="Schneider D.J."/>
            <person name="Cartinhour S.W."/>
            <person name="Nelson W.C."/>
            <person name="Weidman J."/>
            <person name="Watkins K."/>
            <person name="Tran K."/>
            <person name="Khouri H."/>
            <person name="Pierson E.A."/>
            <person name="Pierson L.S. III"/>
            <person name="Thomashow L.S."/>
            <person name="Loper J.E."/>
        </authorList>
    </citation>
    <scope>NUCLEOTIDE SEQUENCE [LARGE SCALE GENOMIC DNA]</scope>
    <source>
        <strain>ATCC BAA-477 / NRRL B-23932 / Pf-5</strain>
    </source>
</reference>
<keyword id="KW-0963">Cytoplasm</keyword>
<keyword id="KW-0441">Lipid A biosynthesis</keyword>
<keyword id="KW-0444">Lipid biosynthesis</keyword>
<keyword id="KW-0443">Lipid metabolism</keyword>
<keyword id="KW-0456">Lyase</keyword>
<accession>Q4KHG5</accession>